<gene>
    <name type="ORF">ATEG_02594</name>
</gene>
<accession>Q0CUP0</accession>
<organism>
    <name type="scientific">Aspergillus terreus (strain NIH 2624 / FGSC A1156)</name>
    <dbReference type="NCBI Taxonomy" id="341663"/>
    <lineage>
        <taxon>Eukaryota</taxon>
        <taxon>Fungi</taxon>
        <taxon>Dikarya</taxon>
        <taxon>Ascomycota</taxon>
        <taxon>Pezizomycotina</taxon>
        <taxon>Eurotiomycetes</taxon>
        <taxon>Eurotiomycetidae</taxon>
        <taxon>Eurotiales</taxon>
        <taxon>Aspergillaceae</taxon>
        <taxon>Aspergillus</taxon>
        <taxon>Aspergillus subgen. Circumdati</taxon>
    </lineage>
</organism>
<evidence type="ECO:0000250" key="1"/>
<evidence type="ECO:0000255" key="2"/>
<evidence type="ECO:0000255" key="3">
    <source>
        <dbReference type="PROSITE-ProRule" id="PRU01161"/>
    </source>
</evidence>
<evidence type="ECO:0000256" key="4">
    <source>
        <dbReference type="SAM" id="MobiDB-lite"/>
    </source>
</evidence>
<evidence type="ECO:0000305" key="5"/>
<reference key="1">
    <citation type="submission" date="2005-09" db="EMBL/GenBank/DDBJ databases">
        <title>Annotation of the Aspergillus terreus NIH2624 genome.</title>
        <authorList>
            <person name="Birren B.W."/>
            <person name="Lander E.S."/>
            <person name="Galagan J.E."/>
            <person name="Nusbaum C."/>
            <person name="Devon K."/>
            <person name="Henn M."/>
            <person name="Ma L.-J."/>
            <person name="Jaffe D.B."/>
            <person name="Butler J."/>
            <person name="Alvarez P."/>
            <person name="Gnerre S."/>
            <person name="Grabherr M."/>
            <person name="Kleber M."/>
            <person name="Mauceli E.W."/>
            <person name="Brockman W."/>
            <person name="Rounsley S."/>
            <person name="Young S.K."/>
            <person name="LaButti K."/>
            <person name="Pushparaj V."/>
            <person name="DeCaprio D."/>
            <person name="Crawford M."/>
            <person name="Koehrsen M."/>
            <person name="Engels R."/>
            <person name="Montgomery P."/>
            <person name="Pearson M."/>
            <person name="Howarth C."/>
            <person name="Larson L."/>
            <person name="Luoma S."/>
            <person name="White J."/>
            <person name="Alvarado L."/>
            <person name="Kodira C.D."/>
            <person name="Zeng Q."/>
            <person name="Oleary S."/>
            <person name="Yandava C."/>
            <person name="Denning D.W."/>
            <person name="Nierman W.C."/>
            <person name="Milne T."/>
            <person name="Madden K."/>
        </authorList>
    </citation>
    <scope>NUCLEOTIDE SEQUENCE [LARGE SCALE GENOMIC DNA]</scope>
    <source>
        <strain>NIH 2624 / FGSC A1156</strain>
    </source>
</reference>
<protein>
    <recommendedName>
        <fullName>Patatin-like phospholipase domain-containing protein ATEG_02594</fullName>
        <ecNumber>3.1.1.-</ecNumber>
    </recommendedName>
</protein>
<proteinExistence type="inferred from homology"/>
<feature type="chain" id="PRO_0000295553" description="Patatin-like phospholipase domain-containing protein ATEG_02594">
    <location>
        <begin position="1"/>
        <end position="715"/>
    </location>
</feature>
<feature type="transmembrane region" description="Helical" evidence="2">
    <location>
        <begin position="84"/>
        <end position="104"/>
    </location>
</feature>
<feature type="domain" description="PNPLA" evidence="3">
    <location>
        <begin position="274"/>
        <end position="465"/>
    </location>
</feature>
<feature type="region of interest" description="Disordered" evidence="4">
    <location>
        <begin position="613"/>
        <end position="715"/>
    </location>
</feature>
<feature type="short sequence motif" description="GXSXG" evidence="3">
    <location>
        <begin position="305"/>
        <end position="309"/>
    </location>
</feature>
<feature type="compositionally biased region" description="Basic and acidic residues" evidence="4">
    <location>
        <begin position="652"/>
        <end position="661"/>
    </location>
</feature>
<feature type="compositionally biased region" description="Polar residues" evidence="4">
    <location>
        <begin position="665"/>
        <end position="678"/>
    </location>
</feature>
<feature type="active site" description="Nucleophile" evidence="3">
    <location>
        <position position="307"/>
    </location>
</feature>
<feature type="active site" description="Proton acceptor" evidence="3">
    <location>
        <position position="452"/>
    </location>
</feature>
<keyword id="KW-0378">Hydrolase</keyword>
<keyword id="KW-0442">Lipid degradation</keyword>
<keyword id="KW-0443">Lipid metabolism</keyword>
<keyword id="KW-0472">Membrane</keyword>
<keyword id="KW-1185">Reference proteome</keyword>
<keyword id="KW-0812">Transmembrane</keyword>
<keyword id="KW-1133">Transmembrane helix</keyword>
<dbReference type="EC" id="3.1.1.-"/>
<dbReference type="EMBL" id="CH476596">
    <property type="protein sequence ID" value="EAU37556.1"/>
    <property type="molecule type" value="Genomic_DNA"/>
</dbReference>
<dbReference type="RefSeq" id="XP_001211772.1">
    <property type="nucleotide sequence ID" value="XM_001211772.1"/>
</dbReference>
<dbReference type="STRING" id="341663.Q0CUP0"/>
<dbReference type="EnsemblFungi" id="EAU37556">
    <property type="protein sequence ID" value="EAU37556"/>
    <property type="gene ID" value="ATEG_02594"/>
</dbReference>
<dbReference type="GeneID" id="4317082"/>
<dbReference type="VEuPathDB" id="FungiDB:ATEG_02594"/>
<dbReference type="eggNOG" id="KOG2214">
    <property type="taxonomic scope" value="Eukaryota"/>
</dbReference>
<dbReference type="HOGENOM" id="CLU_009031_2_2_1"/>
<dbReference type="OMA" id="CSWFTRG"/>
<dbReference type="OrthoDB" id="15478at2759"/>
<dbReference type="Proteomes" id="UP000007963">
    <property type="component" value="Unassembled WGS sequence"/>
</dbReference>
<dbReference type="GO" id="GO:0005811">
    <property type="term" value="C:lipid droplet"/>
    <property type="evidence" value="ECO:0007669"/>
    <property type="project" value="EnsemblFungi"/>
</dbReference>
<dbReference type="GO" id="GO:0016020">
    <property type="term" value="C:membrane"/>
    <property type="evidence" value="ECO:0007669"/>
    <property type="project" value="UniProtKB-SubCell"/>
</dbReference>
<dbReference type="GO" id="GO:0004806">
    <property type="term" value="F:triacylglycerol lipase activity"/>
    <property type="evidence" value="ECO:0007669"/>
    <property type="project" value="EnsemblFungi"/>
</dbReference>
<dbReference type="GO" id="GO:1990748">
    <property type="term" value="P:cellular detoxification"/>
    <property type="evidence" value="ECO:0007669"/>
    <property type="project" value="EnsemblFungi"/>
</dbReference>
<dbReference type="GO" id="GO:0016042">
    <property type="term" value="P:lipid catabolic process"/>
    <property type="evidence" value="ECO:0007669"/>
    <property type="project" value="UniProtKB-KW"/>
</dbReference>
<dbReference type="GO" id="GO:0006642">
    <property type="term" value="P:triglyceride mobilization"/>
    <property type="evidence" value="ECO:0007669"/>
    <property type="project" value="EnsemblFungi"/>
</dbReference>
<dbReference type="CDD" id="cd07232">
    <property type="entry name" value="Pat_PLPL"/>
    <property type="match status" value="1"/>
</dbReference>
<dbReference type="Gene3D" id="3.40.1090.10">
    <property type="entry name" value="Cytosolic phospholipase A2 catalytic domain"/>
    <property type="match status" value="2"/>
</dbReference>
<dbReference type="InterPro" id="IPR016035">
    <property type="entry name" value="Acyl_Trfase/lysoPLipase"/>
</dbReference>
<dbReference type="InterPro" id="IPR050301">
    <property type="entry name" value="NTE"/>
</dbReference>
<dbReference type="InterPro" id="IPR002641">
    <property type="entry name" value="PNPLA_dom"/>
</dbReference>
<dbReference type="InterPro" id="IPR021771">
    <property type="entry name" value="Triacylglycerol_lipase_N"/>
</dbReference>
<dbReference type="PANTHER" id="PTHR14226">
    <property type="entry name" value="NEUROPATHY TARGET ESTERASE/SWISS CHEESE D.MELANOGASTER"/>
    <property type="match status" value="1"/>
</dbReference>
<dbReference type="PANTHER" id="PTHR14226:SF66">
    <property type="entry name" value="TRIACYLGLYCEROL LIPASE PTL2"/>
    <property type="match status" value="1"/>
</dbReference>
<dbReference type="Pfam" id="PF11815">
    <property type="entry name" value="DUF3336"/>
    <property type="match status" value="1"/>
</dbReference>
<dbReference type="Pfam" id="PF01734">
    <property type="entry name" value="Patatin"/>
    <property type="match status" value="1"/>
</dbReference>
<dbReference type="SUPFAM" id="SSF52151">
    <property type="entry name" value="FabD/lysophospholipase-like"/>
    <property type="match status" value="1"/>
</dbReference>
<dbReference type="PROSITE" id="PS51635">
    <property type="entry name" value="PNPLA"/>
    <property type="match status" value="1"/>
</dbReference>
<sequence>MTDSAIGNVYDPRALPDYDREFIHPDDLRRFENALNDQDVLPLVALNDWRPVYQRVRKTRGRRKEPRRTKDETREGVLYTVLKWPFLAFVLGWISFLGVAYILTRFYIFIYEQWVSWRGKRQSLRKQLYVQTNYRDWLKAAEALDAHLGNHAWKEIDENAYYDHITINKLVSQLRKLRQDAEWEMHHEQVNAAESPAVEELCTILEACVKNNFAGVENPRLYSETYSGTKVLVQEYVDEVKACLELVAESKQISDEDKYHHFKHLDTNFGRTALCLSGGATFAYYHFGVVRALLDNNVLPEIITGTSGGALVAALVATRTDEELKQLLVPALAHRIRACHEGFTTWVRRWWRTGARFDTLEWARQCSWFCRGSTTFREAYERTGRILNVSCVPSDPHSPTILANYLTSPNCVIWSAVLASAAVPGILNPVVLMTKKRDGTLAPYSFGHKWKDGSLRTDIPIKALNLHFNVNFTIVSQVNPHINLFFFSSRGAVGRPVTHRKGRGWRGGFLGSAIEQYIKLDMNKWLRVLRHLELLPRPMGQDWSEIWLQKFSGTVTIWPKTVPSDFYYILSDPTPERLARMIHMGQQSAFPKIQFIKNRLKIEYAIIKGLQQTAPRGGGRATSPTQLRLRNGHGNGPVNPIDERLDQNLPERTGEYSKEADANSAEMSDSSGVDSATASALREARHPRRNSMLVEMQRQSAVFFDDVDSDTWKGQ</sequence>
<name>PLPL_ASPTN</name>
<comment type="function">
    <text evidence="1">Probable lipid hydrolase.</text>
</comment>
<comment type="subcellular location">
    <subcellularLocation>
        <location evidence="5">Membrane</location>
        <topology evidence="5">Single-pass membrane protein</topology>
    </subcellularLocation>
</comment>
<comment type="similarity">
    <text evidence="5">Belongs to the PLPL family.</text>
</comment>